<evidence type="ECO:0000255" key="1">
    <source>
        <dbReference type="HAMAP-Rule" id="MF_00336"/>
    </source>
</evidence>
<protein>
    <recommendedName>
        <fullName evidence="1">ATP-dependent dethiobiotin synthetase BioD</fullName>
        <ecNumber evidence="1">6.3.3.3</ecNumber>
    </recommendedName>
    <alternativeName>
        <fullName evidence="1">DTB synthetase</fullName>
        <shortName evidence="1">DTBS</shortName>
    </alternativeName>
    <alternativeName>
        <fullName evidence="1">Dethiobiotin synthase</fullName>
    </alternativeName>
</protein>
<accession>B2UNC5</accession>
<reference key="1">
    <citation type="journal article" date="2011" name="PLoS ONE">
        <title>The genome of Akkermansia muciniphila, a dedicated intestinal mucin degrader, and its use in exploring intestinal metagenomes.</title>
        <authorList>
            <person name="van Passel M.W."/>
            <person name="Kant R."/>
            <person name="Zoetendal E.G."/>
            <person name="Plugge C.M."/>
            <person name="Derrien M."/>
            <person name="Malfatti S.A."/>
            <person name="Chain P.S."/>
            <person name="Woyke T."/>
            <person name="Palva A."/>
            <person name="de Vos W.M."/>
            <person name="Smidt H."/>
        </authorList>
    </citation>
    <scope>NUCLEOTIDE SEQUENCE [LARGE SCALE GENOMIC DNA]</scope>
    <source>
        <strain>ATCC BAA-835 / DSM 22959 / JCM 33894 / BCRC 81048 / CCUG 64013 / CIP 107961 / Muc</strain>
    </source>
</reference>
<name>BIOD_AKKM8</name>
<organism>
    <name type="scientific">Akkermansia muciniphila (strain ATCC BAA-835 / DSM 22959 / JCM 33894 / BCRC 81048 / CCUG 64013 / CIP 107961 / Muc)</name>
    <dbReference type="NCBI Taxonomy" id="349741"/>
    <lineage>
        <taxon>Bacteria</taxon>
        <taxon>Pseudomonadati</taxon>
        <taxon>Verrucomicrobiota</taxon>
        <taxon>Verrucomicrobiia</taxon>
        <taxon>Verrucomicrobiales</taxon>
        <taxon>Akkermansiaceae</taxon>
        <taxon>Akkermansia</taxon>
    </lineage>
</organism>
<comment type="function">
    <text evidence="1">Catalyzes a mechanistically unusual reaction, the ATP-dependent insertion of CO2 between the N7 and N8 nitrogen atoms of 7,8-diaminopelargonic acid (DAPA, also called 7,8-diammoniononanoate) to form a ureido ring.</text>
</comment>
<comment type="catalytic activity">
    <reaction evidence="1">
        <text>(7R,8S)-7,8-diammoniononanoate + CO2 + ATP = (4R,5S)-dethiobiotin + ADP + phosphate + 3 H(+)</text>
        <dbReference type="Rhea" id="RHEA:15805"/>
        <dbReference type="ChEBI" id="CHEBI:15378"/>
        <dbReference type="ChEBI" id="CHEBI:16526"/>
        <dbReference type="ChEBI" id="CHEBI:30616"/>
        <dbReference type="ChEBI" id="CHEBI:43474"/>
        <dbReference type="ChEBI" id="CHEBI:149469"/>
        <dbReference type="ChEBI" id="CHEBI:149473"/>
        <dbReference type="ChEBI" id="CHEBI:456216"/>
        <dbReference type="EC" id="6.3.3.3"/>
    </reaction>
</comment>
<comment type="cofactor">
    <cofactor evidence="1">
        <name>Mg(2+)</name>
        <dbReference type="ChEBI" id="CHEBI:18420"/>
    </cofactor>
</comment>
<comment type="pathway">
    <text evidence="1">Cofactor biosynthesis; biotin biosynthesis; biotin from 7,8-diaminononanoate: step 1/2.</text>
</comment>
<comment type="subunit">
    <text evidence="1">Homodimer.</text>
</comment>
<comment type="subcellular location">
    <subcellularLocation>
        <location evidence="1">Cytoplasm</location>
    </subcellularLocation>
</comment>
<comment type="similarity">
    <text evidence="1">Belongs to the dethiobiotin synthetase family.</text>
</comment>
<gene>
    <name evidence="1" type="primary">bioD</name>
    <name type="ordered locus">Amuc_0398</name>
</gene>
<keyword id="KW-0067">ATP-binding</keyword>
<keyword id="KW-0093">Biotin biosynthesis</keyword>
<keyword id="KW-0963">Cytoplasm</keyword>
<keyword id="KW-0436">Ligase</keyword>
<keyword id="KW-0460">Magnesium</keyword>
<keyword id="KW-0479">Metal-binding</keyword>
<keyword id="KW-0547">Nucleotide-binding</keyword>
<keyword id="KW-1185">Reference proteome</keyword>
<proteinExistence type="inferred from homology"/>
<feature type="chain" id="PRO_1000133197" description="ATP-dependent dethiobiotin synthetase BioD">
    <location>
        <begin position="1"/>
        <end position="213"/>
    </location>
</feature>
<feature type="active site" evidence="1">
    <location>
        <position position="37"/>
    </location>
</feature>
<feature type="binding site" evidence="1">
    <location>
        <begin position="12"/>
        <end position="17"/>
    </location>
    <ligand>
        <name>ATP</name>
        <dbReference type="ChEBI" id="CHEBI:30616"/>
    </ligand>
</feature>
<feature type="binding site" evidence="1">
    <location>
        <position position="16"/>
    </location>
    <ligand>
        <name>Mg(2+)</name>
        <dbReference type="ChEBI" id="CHEBI:18420"/>
    </ligand>
</feature>
<feature type="binding site" evidence="1">
    <location>
        <position position="46"/>
    </location>
    <ligand>
        <name>ATP</name>
        <dbReference type="ChEBI" id="CHEBI:30616"/>
    </ligand>
</feature>
<feature type="binding site" evidence="1">
    <location>
        <position position="46"/>
    </location>
    <ligand>
        <name>Mg(2+)</name>
        <dbReference type="ChEBI" id="CHEBI:18420"/>
    </ligand>
</feature>
<feature type="binding site" evidence="1">
    <location>
        <begin position="107"/>
        <end position="110"/>
    </location>
    <ligand>
        <name>ATP</name>
        <dbReference type="ChEBI" id="CHEBI:30616"/>
    </ligand>
</feature>
<feature type="binding site" evidence="1">
    <location>
        <position position="107"/>
    </location>
    <ligand>
        <name>Mg(2+)</name>
        <dbReference type="ChEBI" id="CHEBI:18420"/>
    </ligand>
</feature>
<feature type="binding site" evidence="1">
    <location>
        <begin position="167"/>
        <end position="168"/>
    </location>
    <ligand>
        <name>ATP</name>
        <dbReference type="ChEBI" id="CHEBI:30616"/>
    </ligand>
</feature>
<sequence>MRNFIVTGTDTEVGKTYVSCLIVKSLREAGINAAGFKPVACGDRQDARLLREAGPKDLTLDELNPVFLRNATCPYVAARLENTKVDEKVILRAYDALSAAHECVVVEGVGGWEVPIGPGRNFSDMAADFKLPVLLVIGNKLGAINHALLTLNAIKERGLECLGIVFNNVKDEWDTACVTNRSMVEEFSDAPILGELIHGQDYMDMDVLLERLH</sequence>
<dbReference type="EC" id="6.3.3.3" evidence="1"/>
<dbReference type="EMBL" id="CP001071">
    <property type="protein sequence ID" value="ACD04237.1"/>
    <property type="molecule type" value="Genomic_DNA"/>
</dbReference>
<dbReference type="RefSeq" id="WP_012419452.1">
    <property type="nucleotide sequence ID" value="NZ_CP071807.1"/>
</dbReference>
<dbReference type="SMR" id="B2UNC5"/>
<dbReference type="STRING" id="349741.Amuc_0398"/>
<dbReference type="PaxDb" id="349741-Amuc_0398"/>
<dbReference type="KEGG" id="amu:Amuc_0398"/>
<dbReference type="eggNOG" id="COG0132">
    <property type="taxonomic scope" value="Bacteria"/>
</dbReference>
<dbReference type="HOGENOM" id="CLU_072551_3_1_0"/>
<dbReference type="OrthoDB" id="9802097at2"/>
<dbReference type="BioCyc" id="AMUC349741:G1GBX-442-MONOMER"/>
<dbReference type="UniPathway" id="UPA00078">
    <property type="reaction ID" value="UER00161"/>
</dbReference>
<dbReference type="Proteomes" id="UP000001031">
    <property type="component" value="Chromosome"/>
</dbReference>
<dbReference type="GO" id="GO:0005829">
    <property type="term" value="C:cytosol"/>
    <property type="evidence" value="ECO:0007669"/>
    <property type="project" value="TreeGrafter"/>
</dbReference>
<dbReference type="GO" id="GO:0005524">
    <property type="term" value="F:ATP binding"/>
    <property type="evidence" value="ECO:0007669"/>
    <property type="project" value="UniProtKB-UniRule"/>
</dbReference>
<dbReference type="GO" id="GO:0004141">
    <property type="term" value="F:dethiobiotin synthase activity"/>
    <property type="evidence" value="ECO:0007669"/>
    <property type="project" value="UniProtKB-UniRule"/>
</dbReference>
<dbReference type="GO" id="GO:0000287">
    <property type="term" value="F:magnesium ion binding"/>
    <property type="evidence" value="ECO:0007669"/>
    <property type="project" value="UniProtKB-UniRule"/>
</dbReference>
<dbReference type="GO" id="GO:0009102">
    <property type="term" value="P:biotin biosynthetic process"/>
    <property type="evidence" value="ECO:0007669"/>
    <property type="project" value="UniProtKB-UniRule"/>
</dbReference>
<dbReference type="CDD" id="cd03109">
    <property type="entry name" value="DTBS"/>
    <property type="match status" value="1"/>
</dbReference>
<dbReference type="FunFam" id="3.40.50.300:FF:000292">
    <property type="entry name" value="ATP-dependent dethiobiotin synthetase BioD"/>
    <property type="match status" value="1"/>
</dbReference>
<dbReference type="Gene3D" id="3.40.50.300">
    <property type="entry name" value="P-loop containing nucleotide triphosphate hydrolases"/>
    <property type="match status" value="1"/>
</dbReference>
<dbReference type="HAMAP" id="MF_00336">
    <property type="entry name" value="BioD"/>
    <property type="match status" value="1"/>
</dbReference>
<dbReference type="InterPro" id="IPR004472">
    <property type="entry name" value="DTB_synth_BioD"/>
</dbReference>
<dbReference type="InterPro" id="IPR027417">
    <property type="entry name" value="P-loop_NTPase"/>
</dbReference>
<dbReference type="NCBIfam" id="TIGR00347">
    <property type="entry name" value="bioD"/>
    <property type="match status" value="1"/>
</dbReference>
<dbReference type="PANTHER" id="PTHR43210:SF2">
    <property type="entry name" value="ATP-DEPENDENT DETHIOBIOTIN SYNTHETASE BIOD 2"/>
    <property type="match status" value="1"/>
</dbReference>
<dbReference type="PANTHER" id="PTHR43210">
    <property type="entry name" value="DETHIOBIOTIN SYNTHETASE"/>
    <property type="match status" value="1"/>
</dbReference>
<dbReference type="Pfam" id="PF13500">
    <property type="entry name" value="AAA_26"/>
    <property type="match status" value="1"/>
</dbReference>
<dbReference type="PIRSF" id="PIRSF006755">
    <property type="entry name" value="DTB_synth"/>
    <property type="match status" value="1"/>
</dbReference>
<dbReference type="SUPFAM" id="SSF52540">
    <property type="entry name" value="P-loop containing nucleoside triphosphate hydrolases"/>
    <property type="match status" value="1"/>
</dbReference>